<organism>
    <name type="scientific">Schizosaccharomyces pombe (strain 972 / ATCC 24843)</name>
    <name type="common">Fission yeast</name>
    <dbReference type="NCBI Taxonomy" id="284812"/>
    <lineage>
        <taxon>Eukaryota</taxon>
        <taxon>Fungi</taxon>
        <taxon>Dikarya</taxon>
        <taxon>Ascomycota</taxon>
        <taxon>Taphrinomycotina</taxon>
        <taxon>Schizosaccharomycetes</taxon>
        <taxon>Schizosaccharomycetales</taxon>
        <taxon>Schizosaccharomycetaceae</taxon>
        <taxon>Schizosaccharomyces</taxon>
    </lineage>
</organism>
<reference key="1">
    <citation type="journal article" date="2002" name="Nature">
        <title>The genome sequence of Schizosaccharomyces pombe.</title>
        <authorList>
            <person name="Wood V."/>
            <person name="Gwilliam R."/>
            <person name="Rajandream M.A."/>
            <person name="Lyne M.H."/>
            <person name="Lyne R."/>
            <person name="Stewart A."/>
            <person name="Sgouros J.G."/>
            <person name="Peat N."/>
            <person name="Hayles J."/>
            <person name="Baker S.G."/>
            <person name="Basham D."/>
            <person name="Bowman S."/>
            <person name="Brooks K."/>
            <person name="Brown D."/>
            <person name="Brown S."/>
            <person name="Chillingworth T."/>
            <person name="Churcher C.M."/>
            <person name="Collins M."/>
            <person name="Connor R."/>
            <person name="Cronin A."/>
            <person name="Davis P."/>
            <person name="Feltwell T."/>
            <person name="Fraser A."/>
            <person name="Gentles S."/>
            <person name="Goble A."/>
            <person name="Hamlin N."/>
            <person name="Harris D.E."/>
            <person name="Hidalgo J."/>
            <person name="Hodgson G."/>
            <person name="Holroyd S."/>
            <person name="Hornsby T."/>
            <person name="Howarth S."/>
            <person name="Huckle E.J."/>
            <person name="Hunt S."/>
            <person name="Jagels K."/>
            <person name="James K.D."/>
            <person name="Jones L."/>
            <person name="Jones M."/>
            <person name="Leather S."/>
            <person name="McDonald S."/>
            <person name="McLean J."/>
            <person name="Mooney P."/>
            <person name="Moule S."/>
            <person name="Mungall K.L."/>
            <person name="Murphy L.D."/>
            <person name="Niblett D."/>
            <person name="Odell C."/>
            <person name="Oliver K."/>
            <person name="O'Neil S."/>
            <person name="Pearson D."/>
            <person name="Quail M.A."/>
            <person name="Rabbinowitsch E."/>
            <person name="Rutherford K.M."/>
            <person name="Rutter S."/>
            <person name="Saunders D."/>
            <person name="Seeger K."/>
            <person name="Sharp S."/>
            <person name="Skelton J."/>
            <person name="Simmonds M.N."/>
            <person name="Squares R."/>
            <person name="Squares S."/>
            <person name="Stevens K."/>
            <person name="Taylor K."/>
            <person name="Taylor R.G."/>
            <person name="Tivey A."/>
            <person name="Walsh S.V."/>
            <person name="Warren T."/>
            <person name="Whitehead S."/>
            <person name="Woodward J.R."/>
            <person name="Volckaert G."/>
            <person name="Aert R."/>
            <person name="Robben J."/>
            <person name="Grymonprez B."/>
            <person name="Weltjens I."/>
            <person name="Vanstreels E."/>
            <person name="Rieger M."/>
            <person name="Schaefer M."/>
            <person name="Mueller-Auer S."/>
            <person name="Gabel C."/>
            <person name="Fuchs M."/>
            <person name="Duesterhoeft A."/>
            <person name="Fritzc C."/>
            <person name="Holzer E."/>
            <person name="Moestl D."/>
            <person name="Hilbert H."/>
            <person name="Borzym K."/>
            <person name="Langer I."/>
            <person name="Beck A."/>
            <person name="Lehrach H."/>
            <person name="Reinhardt R."/>
            <person name="Pohl T.M."/>
            <person name="Eger P."/>
            <person name="Zimmermann W."/>
            <person name="Wedler H."/>
            <person name="Wambutt R."/>
            <person name="Purnelle B."/>
            <person name="Goffeau A."/>
            <person name="Cadieu E."/>
            <person name="Dreano S."/>
            <person name="Gloux S."/>
            <person name="Lelaure V."/>
            <person name="Mottier S."/>
            <person name="Galibert F."/>
            <person name="Aves S.J."/>
            <person name="Xiang Z."/>
            <person name="Hunt C."/>
            <person name="Moore K."/>
            <person name="Hurst S.M."/>
            <person name="Lucas M."/>
            <person name="Rochet M."/>
            <person name="Gaillardin C."/>
            <person name="Tallada V.A."/>
            <person name="Garzon A."/>
            <person name="Thode G."/>
            <person name="Daga R.R."/>
            <person name="Cruzado L."/>
            <person name="Jimenez J."/>
            <person name="Sanchez M."/>
            <person name="del Rey F."/>
            <person name="Benito J."/>
            <person name="Dominguez A."/>
            <person name="Revuelta J.L."/>
            <person name="Moreno S."/>
            <person name="Armstrong J."/>
            <person name="Forsburg S.L."/>
            <person name="Cerutti L."/>
            <person name="Lowe T."/>
            <person name="McCombie W.R."/>
            <person name="Paulsen I."/>
            <person name="Potashkin J."/>
            <person name="Shpakovski G.V."/>
            <person name="Ussery D."/>
            <person name="Barrell B.G."/>
            <person name="Nurse P."/>
        </authorList>
    </citation>
    <scope>NUCLEOTIDE SEQUENCE [LARGE SCALE GENOMIC DNA]</scope>
    <source>
        <strain>972 / ATCC 24843</strain>
    </source>
</reference>
<gene>
    <name type="primary">dur3-1</name>
    <name type="ORF">SPBC23G7.13c</name>
</gene>
<proteinExistence type="inferred from homology"/>
<keyword id="KW-0472">Membrane</keyword>
<keyword id="KW-1185">Reference proteome</keyword>
<keyword id="KW-0812">Transmembrane</keyword>
<keyword id="KW-1133">Transmembrane helix</keyword>
<keyword id="KW-0813">Transport</keyword>
<feature type="chain" id="PRO_0000314766" description="Probable urea active transporter 1">
    <location>
        <begin position="1"/>
        <end position="664"/>
    </location>
</feature>
<feature type="transmembrane region" description="Helical" evidence="2">
    <location>
        <begin position="9"/>
        <end position="29"/>
    </location>
</feature>
<feature type="transmembrane region" description="Helical" evidence="2">
    <location>
        <begin position="56"/>
        <end position="76"/>
    </location>
</feature>
<feature type="transmembrane region" description="Helical" evidence="2">
    <location>
        <begin position="86"/>
        <end position="106"/>
    </location>
</feature>
<feature type="transmembrane region" description="Helical" evidence="2">
    <location>
        <begin position="132"/>
        <end position="152"/>
    </location>
</feature>
<feature type="transmembrane region" description="Helical" evidence="2">
    <location>
        <begin position="165"/>
        <end position="185"/>
    </location>
</feature>
<feature type="transmembrane region" description="Helical" evidence="2">
    <location>
        <begin position="189"/>
        <end position="209"/>
    </location>
</feature>
<feature type="transmembrane region" description="Helical" evidence="2">
    <location>
        <begin position="252"/>
        <end position="272"/>
    </location>
</feature>
<feature type="transmembrane region" description="Helical" evidence="2">
    <location>
        <begin position="290"/>
        <end position="310"/>
    </location>
</feature>
<feature type="transmembrane region" description="Helical" evidence="2">
    <location>
        <begin position="327"/>
        <end position="347"/>
    </location>
</feature>
<feature type="transmembrane region" description="Helical" evidence="2">
    <location>
        <begin position="353"/>
        <end position="373"/>
    </location>
</feature>
<feature type="transmembrane region" description="Helical" evidence="2">
    <location>
        <begin position="395"/>
        <end position="415"/>
    </location>
</feature>
<feature type="transmembrane region" description="Helical" evidence="2">
    <location>
        <begin position="428"/>
        <end position="448"/>
    </location>
</feature>
<feature type="transmembrane region" description="Helical" evidence="2">
    <location>
        <begin position="454"/>
        <end position="474"/>
    </location>
</feature>
<feature type="transmembrane region" description="Helical" evidence="2">
    <location>
        <begin position="496"/>
        <end position="516"/>
    </location>
</feature>
<feature type="transmembrane region" description="Helical" evidence="2">
    <location>
        <begin position="555"/>
        <end position="575"/>
    </location>
</feature>
<feature type="transmembrane region" description="Helical" evidence="2">
    <location>
        <begin position="587"/>
        <end position="607"/>
    </location>
</feature>
<sequence length="664" mass="71720">MVQPELTQSVGYGIVVGLGLGFAALMIFVSWSLKKFNNENQTSEHFNTASHSVRTGLVASAVVSSWTWASTLLTSAQKTYQYGVSGAFWYASGACVQILLFTVLAIELKRKAPNAHTFLEVVRARCGPIAHGVFLVFAYITNILVMAMLLCGGSATISSVTGMNTVAVCFLLPVGVIIYTMFGGIKATFLTDYIHTVIILVILIMFSLATYSADKKIGSPGKLYDMLKEAGDAHPVAGNAQGSYLTMRSQEGAIFFIINLAGNFGTVFVDNGYWQKAIAANPASALPGYILGGLAWFAIPWLAATTMGLVALGLENKPYFPTYPNRMSDLEVSEGLVLPYAAIALMGRAGANATLLLVFMAVTSAASAELIAVSSIFTYDIYKQYVRPRATGKELLYTGHASLIVFGFAMSGFATGLYYGQVSMGYLYLLMGVLVCPAVVPATCVMLFSRVSTIAVTVSPVLGIISSIITWLVVARAEGGKTLTIETTGANNPMLAGNVVGLLSPALYILILSIIFPEKYDFNRLLATFAMHFSSEEDEIQQTKKLNRASVISKVAALIITAAFIILWPWPMYGTGYIFSKRFFTGWVVVGLIWIFFTVFAVGIFPLWEGRNDIYQVVSNMAASIFGRKVNDIVEDEGVVVETISIGSGSKEKVNFEKKDIESV</sequence>
<name>DUR31_SCHPO</name>
<evidence type="ECO:0000250" key="1"/>
<evidence type="ECO:0000255" key="2"/>
<evidence type="ECO:0000305" key="3"/>
<dbReference type="EMBL" id="CU329671">
    <property type="protein sequence ID" value="CAA22629.1"/>
    <property type="molecule type" value="Genomic_DNA"/>
</dbReference>
<dbReference type="PIR" id="T39959">
    <property type="entry name" value="T39959"/>
</dbReference>
<dbReference type="RefSeq" id="NP_595871.1">
    <property type="nucleotide sequence ID" value="NM_001021777.2"/>
</dbReference>
<dbReference type="SMR" id="O94469"/>
<dbReference type="BioGRID" id="277055">
    <property type="interactions" value="4"/>
</dbReference>
<dbReference type="FunCoup" id="O94469">
    <property type="interactions" value="191"/>
</dbReference>
<dbReference type="STRING" id="284812.O94469"/>
<dbReference type="PaxDb" id="4896-SPBC23G7.13c.1"/>
<dbReference type="EnsemblFungi" id="SPBC23G7.13c.1">
    <property type="protein sequence ID" value="SPBC23G7.13c.1:pep"/>
    <property type="gene ID" value="SPBC23G7.13c"/>
</dbReference>
<dbReference type="KEGG" id="spo:2540527"/>
<dbReference type="PomBase" id="SPBC23G7.13c"/>
<dbReference type="VEuPathDB" id="FungiDB:SPBC23G7.13c"/>
<dbReference type="eggNOG" id="KOG2348">
    <property type="taxonomic scope" value="Eukaryota"/>
</dbReference>
<dbReference type="HOGENOM" id="CLU_010778_2_1_1"/>
<dbReference type="InParanoid" id="O94469"/>
<dbReference type="OMA" id="MTATWIW"/>
<dbReference type="PhylomeDB" id="O94469"/>
<dbReference type="PRO" id="PR:O94469"/>
<dbReference type="Proteomes" id="UP000002485">
    <property type="component" value="Chromosome II"/>
</dbReference>
<dbReference type="GO" id="GO:0005886">
    <property type="term" value="C:plasma membrane"/>
    <property type="evidence" value="ECO:0000318"/>
    <property type="project" value="GO_Central"/>
</dbReference>
<dbReference type="GO" id="GO:0015489">
    <property type="term" value="F:putrescine transmembrane transporter activity"/>
    <property type="evidence" value="ECO:0000318"/>
    <property type="project" value="GO_Central"/>
</dbReference>
<dbReference type="GO" id="GO:0015606">
    <property type="term" value="F:spermidine transmembrane transporter activity"/>
    <property type="evidence" value="ECO:0000318"/>
    <property type="project" value="GO_Central"/>
</dbReference>
<dbReference type="GO" id="GO:0015204">
    <property type="term" value="F:urea transmembrane transporter activity"/>
    <property type="evidence" value="ECO:0000318"/>
    <property type="project" value="GO_Central"/>
</dbReference>
<dbReference type="GO" id="GO:0015847">
    <property type="term" value="P:putrescine transport"/>
    <property type="evidence" value="ECO:0000318"/>
    <property type="project" value="GO_Central"/>
</dbReference>
<dbReference type="GO" id="GO:0015848">
    <property type="term" value="P:spermidine transport"/>
    <property type="evidence" value="ECO:0000318"/>
    <property type="project" value="GO_Central"/>
</dbReference>
<dbReference type="GO" id="GO:0071918">
    <property type="term" value="P:urea transmembrane transport"/>
    <property type="evidence" value="ECO:0000266"/>
    <property type="project" value="PomBase"/>
</dbReference>
<dbReference type="GO" id="GO:0015840">
    <property type="term" value="P:urea transport"/>
    <property type="evidence" value="ECO:0000318"/>
    <property type="project" value="GO_Central"/>
</dbReference>
<dbReference type="CDD" id="cd11476">
    <property type="entry name" value="SLC5sbd_DUR3"/>
    <property type="match status" value="1"/>
</dbReference>
<dbReference type="FunFam" id="1.20.1730.10:FF:000006">
    <property type="entry name" value="Urea active transporter"/>
    <property type="match status" value="1"/>
</dbReference>
<dbReference type="Gene3D" id="1.20.1730.10">
    <property type="entry name" value="Sodium/glucose cotransporter"/>
    <property type="match status" value="1"/>
</dbReference>
<dbReference type="InterPro" id="IPR031155">
    <property type="entry name" value="DUR"/>
</dbReference>
<dbReference type="InterPro" id="IPR038377">
    <property type="entry name" value="Na/Glc_symporter_sf"/>
</dbReference>
<dbReference type="InterPro" id="IPR001734">
    <property type="entry name" value="Na/solute_symporter"/>
</dbReference>
<dbReference type="NCBIfam" id="TIGR00813">
    <property type="entry name" value="sss"/>
    <property type="match status" value="1"/>
</dbReference>
<dbReference type="PANTHER" id="PTHR46154">
    <property type="match status" value="1"/>
</dbReference>
<dbReference type="PANTHER" id="PTHR46154:SF4">
    <property type="entry name" value="UREA ACTIVE TRANSPORTER"/>
    <property type="match status" value="1"/>
</dbReference>
<dbReference type="Pfam" id="PF00474">
    <property type="entry name" value="SSF"/>
    <property type="match status" value="1"/>
</dbReference>
<dbReference type="PROSITE" id="PS50283">
    <property type="entry name" value="NA_SOLUT_SYMP_3"/>
    <property type="match status" value="1"/>
</dbReference>
<accession>O94469</accession>
<comment type="function">
    <text evidence="1">Involved in active transport of urea.</text>
</comment>
<comment type="subcellular location">
    <subcellularLocation>
        <location>Membrane</location>
        <topology>Multi-pass membrane protein</topology>
    </subcellularLocation>
</comment>
<comment type="similarity">
    <text evidence="3">Belongs to the sodium:solute symporter (SSF) (TC 2.A.21) family.</text>
</comment>
<protein>
    <recommendedName>
        <fullName>Probable urea active transporter 1</fullName>
    </recommendedName>
</protein>